<feature type="chain" id="PRO_1000129865" description="GMP reductase">
    <location>
        <begin position="1"/>
        <end position="347"/>
    </location>
</feature>
<feature type="active site" description="Thioimidate intermediate" evidence="1">
    <location>
        <position position="186"/>
    </location>
</feature>
<feature type="binding site" evidence="1">
    <location>
        <begin position="108"/>
        <end position="131"/>
    </location>
    <ligand>
        <name>NADP(+)</name>
        <dbReference type="ChEBI" id="CHEBI:58349"/>
    </ligand>
</feature>
<feature type="binding site" evidence="1">
    <location>
        <position position="181"/>
    </location>
    <ligand>
        <name>K(+)</name>
        <dbReference type="ChEBI" id="CHEBI:29103"/>
    </ligand>
</feature>
<feature type="binding site" evidence="1">
    <location>
        <position position="183"/>
    </location>
    <ligand>
        <name>K(+)</name>
        <dbReference type="ChEBI" id="CHEBI:29103"/>
    </ligand>
</feature>
<feature type="binding site" evidence="1">
    <location>
        <begin position="216"/>
        <end position="239"/>
    </location>
    <ligand>
        <name>NADP(+)</name>
        <dbReference type="ChEBI" id="CHEBI:58349"/>
    </ligand>
</feature>
<reference key="1">
    <citation type="journal article" date="2011" name="J. Bacteriol.">
        <title>Comparative genomics of 28 Salmonella enterica isolates: evidence for CRISPR-mediated adaptive sublineage evolution.</title>
        <authorList>
            <person name="Fricke W.F."/>
            <person name="Mammel M.K."/>
            <person name="McDermott P.F."/>
            <person name="Tartera C."/>
            <person name="White D.G."/>
            <person name="Leclerc J.E."/>
            <person name="Ravel J."/>
            <person name="Cebula T.A."/>
        </authorList>
    </citation>
    <scope>NUCLEOTIDE SEQUENCE [LARGE SCALE GENOMIC DNA]</scope>
    <source>
        <strain>SL254</strain>
    </source>
</reference>
<accession>B4SU63</accession>
<comment type="function">
    <text evidence="1">Catalyzes the irreversible NADPH-dependent deamination of GMP to IMP. It functions in the conversion of nucleobase, nucleoside and nucleotide derivatives of G to A nucleotides, and in maintaining the intracellular balance of A and G nucleotides.</text>
</comment>
<comment type="catalytic activity">
    <reaction evidence="1">
        <text>IMP + NH4(+) + NADP(+) = GMP + NADPH + 2 H(+)</text>
        <dbReference type="Rhea" id="RHEA:17185"/>
        <dbReference type="ChEBI" id="CHEBI:15378"/>
        <dbReference type="ChEBI" id="CHEBI:28938"/>
        <dbReference type="ChEBI" id="CHEBI:57783"/>
        <dbReference type="ChEBI" id="CHEBI:58053"/>
        <dbReference type="ChEBI" id="CHEBI:58115"/>
        <dbReference type="ChEBI" id="CHEBI:58349"/>
        <dbReference type="EC" id="1.7.1.7"/>
    </reaction>
</comment>
<comment type="subunit">
    <text evidence="1">Homotetramer.</text>
</comment>
<comment type="similarity">
    <text evidence="1">Belongs to the IMPDH/GMPR family. GuaC type 1 subfamily.</text>
</comment>
<sequence>MRIEEDLKLGFKDVLIRPKRSTLKSRSDVELERQFTFKHSGQTWSGVPIIAANMDTVGTFEMAQALAGFDILTAVHKHYTVEEWAAFINTASADVLKHVMVSTGTSDADFEKTVQILALNPALNFVCIDVANGYSEHFVQFVAKAREAWPTKTICAGNVVTGEMCEELILSGADIVKVGIGPGSVCTTRVKTGVGYPQLSAVIECADAAHGLGGMIVSDGGCTMPGDVAKAFGGGADFVMLGGMLAGHEESGGSVVEENGEKFMLFYGMSSESAMNRHVGGVAKYRAAEGKTVKLPLRGPVGNTARDILGGLRSACTYVGASRLKELTKRTTFIRVQEQENRIFNSL</sequence>
<name>GUAC_SALNS</name>
<evidence type="ECO:0000255" key="1">
    <source>
        <dbReference type="HAMAP-Rule" id="MF_00596"/>
    </source>
</evidence>
<dbReference type="EC" id="1.7.1.7" evidence="1"/>
<dbReference type="EMBL" id="CP001113">
    <property type="protein sequence ID" value="ACF61979.1"/>
    <property type="molecule type" value="Genomic_DNA"/>
</dbReference>
<dbReference type="RefSeq" id="WP_001217365.1">
    <property type="nucleotide sequence ID" value="NZ_CCMR01000003.1"/>
</dbReference>
<dbReference type="SMR" id="B4SU63"/>
<dbReference type="KEGG" id="see:SNSL254_A0154"/>
<dbReference type="HOGENOM" id="CLU_022552_5_3_6"/>
<dbReference type="Proteomes" id="UP000008824">
    <property type="component" value="Chromosome"/>
</dbReference>
<dbReference type="GO" id="GO:0005829">
    <property type="term" value="C:cytosol"/>
    <property type="evidence" value="ECO:0007669"/>
    <property type="project" value="TreeGrafter"/>
</dbReference>
<dbReference type="GO" id="GO:1902560">
    <property type="term" value="C:GMP reductase complex"/>
    <property type="evidence" value="ECO:0007669"/>
    <property type="project" value="InterPro"/>
</dbReference>
<dbReference type="GO" id="GO:0003920">
    <property type="term" value="F:GMP reductase activity"/>
    <property type="evidence" value="ECO:0007669"/>
    <property type="project" value="UniProtKB-UniRule"/>
</dbReference>
<dbReference type="GO" id="GO:0046872">
    <property type="term" value="F:metal ion binding"/>
    <property type="evidence" value="ECO:0007669"/>
    <property type="project" value="UniProtKB-KW"/>
</dbReference>
<dbReference type="GO" id="GO:0006163">
    <property type="term" value="P:purine nucleotide metabolic process"/>
    <property type="evidence" value="ECO:0007669"/>
    <property type="project" value="UniProtKB-UniRule"/>
</dbReference>
<dbReference type="CDD" id="cd00381">
    <property type="entry name" value="IMPDH"/>
    <property type="match status" value="1"/>
</dbReference>
<dbReference type="FunFam" id="3.20.20.70:FF:000012">
    <property type="entry name" value="GMP reductase"/>
    <property type="match status" value="1"/>
</dbReference>
<dbReference type="Gene3D" id="3.20.20.70">
    <property type="entry name" value="Aldolase class I"/>
    <property type="match status" value="1"/>
</dbReference>
<dbReference type="HAMAP" id="MF_00596">
    <property type="entry name" value="GMP_reduct_type1"/>
    <property type="match status" value="1"/>
</dbReference>
<dbReference type="InterPro" id="IPR013785">
    <property type="entry name" value="Aldolase_TIM"/>
</dbReference>
<dbReference type="InterPro" id="IPR050139">
    <property type="entry name" value="GMP_reductase"/>
</dbReference>
<dbReference type="InterPro" id="IPR005993">
    <property type="entry name" value="GMPR"/>
</dbReference>
<dbReference type="InterPro" id="IPR015875">
    <property type="entry name" value="IMP_DH/GMP_Rdtase_CS"/>
</dbReference>
<dbReference type="InterPro" id="IPR001093">
    <property type="entry name" value="IMP_DH_GMPRt"/>
</dbReference>
<dbReference type="NCBIfam" id="TIGR01305">
    <property type="entry name" value="GMP_reduct_1"/>
    <property type="match status" value="1"/>
</dbReference>
<dbReference type="NCBIfam" id="NF003470">
    <property type="entry name" value="PRK05096.1"/>
    <property type="match status" value="1"/>
</dbReference>
<dbReference type="PANTHER" id="PTHR43170">
    <property type="entry name" value="GMP REDUCTASE"/>
    <property type="match status" value="1"/>
</dbReference>
<dbReference type="PANTHER" id="PTHR43170:SF5">
    <property type="entry name" value="GMP REDUCTASE"/>
    <property type="match status" value="1"/>
</dbReference>
<dbReference type="Pfam" id="PF00478">
    <property type="entry name" value="IMPDH"/>
    <property type="match status" value="1"/>
</dbReference>
<dbReference type="PIRSF" id="PIRSF000235">
    <property type="entry name" value="GMP_reductase"/>
    <property type="match status" value="1"/>
</dbReference>
<dbReference type="SMART" id="SM01240">
    <property type="entry name" value="IMPDH"/>
    <property type="match status" value="1"/>
</dbReference>
<dbReference type="SUPFAM" id="SSF51412">
    <property type="entry name" value="Inosine monophosphate dehydrogenase (IMPDH)"/>
    <property type="match status" value="1"/>
</dbReference>
<dbReference type="PROSITE" id="PS00487">
    <property type="entry name" value="IMP_DH_GMP_RED"/>
    <property type="match status" value="1"/>
</dbReference>
<keyword id="KW-0479">Metal-binding</keyword>
<keyword id="KW-0521">NADP</keyword>
<keyword id="KW-0560">Oxidoreductase</keyword>
<keyword id="KW-0630">Potassium</keyword>
<protein>
    <recommendedName>
        <fullName evidence="1">GMP reductase</fullName>
        <ecNumber evidence="1">1.7.1.7</ecNumber>
    </recommendedName>
    <alternativeName>
        <fullName evidence="1">Guanosine 5'-monophosphate oxidoreductase</fullName>
        <shortName evidence="1">Guanosine monophosphate reductase</shortName>
    </alternativeName>
</protein>
<gene>
    <name evidence="1" type="primary">guaC</name>
    <name type="ordered locus">SNSL254_A0154</name>
</gene>
<organism>
    <name type="scientific">Salmonella newport (strain SL254)</name>
    <dbReference type="NCBI Taxonomy" id="423368"/>
    <lineage>
        <taxon>Bacteria</taxon>
        <taxon>Pseudomonadati</taxon>
        <taxon>Pseudomonadota</taxon>
        <taxon>Gammaproteobacteria</taxon>
        <taxon>Enterobacterales</taxon>
        <taxon>Enterobacteriaceae</taxon>
        <taxon>Salmonella</taxon>
    </lineage>
</organism>
<proteinExistence type="inferred from homology"/>